<protein>
    <recommendedName>
        <fullName evidence="1">Small ribosomal subunit protein bS18</fullName>
    </recommendedName>
    <alternativeName>
        <fullName evidence="2">30S ribosomal protein S18</fullName>
    </alternativeName>
</protein>
<proteinExistence type="inferred from homology"/>
<gene>
    <name evidence="1" type="primary">rpsR</name>
    <name type="ordered locus">BVU_0012</name>
</gene>
<comment type="function">
    <text evidence="1">Binds as a heterodimer with protein bS6 to the central domain of the 16S rRNA, where it helps stabilize the platform of the 30S subunit.</text>
</comment>
<comment type="subunit">
    <text evidence="1">Part of the 30S ribosomal subunit. Forms a tight heterodimer with protein bS6.</text>
</comment>
<comment type="similarity">
    <text evidence="1">Belongs to the bacterial ribosomal protein bS18 family.</text>
</comment>
<feature type="chain" id="PRO_1000003445" description="Small ribosomal subunit protein bS18">
    <location>
        <begin position="1"/>
        <end position="89"/>
    </location>
</feature>
<name>RS18_PHOV8</name>
<evidence type="ECO:0000255" key="1">
    <source>
        <dbReference type="HAMAP-Rule" id="MF_00270"/>
    </source>
</evidence>
<evidence type="ECO:0000305" key="2"/>
<organism>
    <name type="scientific">Phocaeicola vulgatus (strain ATCC 8482 / DSM 1447 / JCM 5826 / CCUG 4940 / NBRC 14291 / NCTC 11154)</name>
    <name type="common">Bacteroides vulgatus</name>
    <dbReference type="NCBI Taxonomy" id="435590"/>
    <lineage>
        <taxon>Bacteria</taxon>
        <taxon>Pseudomonadati</taxon>
        <taxon>Bacteroidota</taxon>
        <taxon>Bacteroidia</taxon>
        <taxon>Bacteroidales</taxon>
        <taxon>Bacteroidaceae</taxon>
        <taxon>Phocaeicola</taxon>
    </lineage>
</organism>
<keyword id="KW-0687">Ribonucleoprotein</keyword>
<keyword id="KW-0689">Ribosomal protein</keyword>
<keyword id="KW-0694">RNA-binding</keyword>
<keyword id="KW-0699">rRNA-binding</keyword>
<sequence>MAQQQSEIRYLTPPSVDVKKKKYCRFKKSGIKYIDYKDPEFLKKFLNEQGKILPRRITGTSLKFQRRIAQAVKRARHLALLPFVTDMMK</sequence>
<reference key="1">
    <citation type="journal article" date="2007" name="PLoS Biol.">
        <title>Evolution of symbiotic bacteria in the distal human intestine.</title>
        <authorList>
            <person name="Xu J."/>
            <person name="Mahowald M.A."/>
            <person name="Ley R.E."/>
            <person name="Lozupone C.A."/>
            <person name="Hamady M."/>
            <person name="Martens E.C."/>
            <person name="Henrissat B."/>
            <person name="Coutinho P.M."/>
            <person name="Minx P."/>
            <person name="Latreille P."/>
            <person name="Cordum H."/>
            <person name="Van Brunt A."/>
            <person name="Kim K."/>
            <person name="Fulton R.S."/>
            <person name="Fulton L.A."/>
            <person name="Clifton S.W."/>
            <person name="Wilson R.K."/>
            <person name="Knight R.D."/>
            <person name="Gordon J.I."/>
        </authorList>
    </citation>
    <scope>NUCLEOTIDE SEQUENCE [LARGE SCALE GENOMIC DNA]</scope>
    <source>
        <strain>ATCC 8482 / DSM 1447 / JCM 5826 / CCUG 4940 / NBRC 14291 / NCTC 11154</strain>
    </source>
</reference>
<accession>A6KWD6</accession>
<dbReference type="EMBL" id="CP000139">
    <property type="protein sequence ID" value="ABR37742.1"/>
    <property type="molecule type" value="Genomic_DNA"/>
</dbReference>
<dbReference type="RefSeq" id="WP_005841178.1">
    <property type="nucleotide sequence ID" value="NZ_JANSWM010000070.1"/>
</dbReference>
<dbReference type="SMR" id="A6KWD6"/>
<dbReference type="STRING" id="435590.BVU_0012"/>
<dbReference type="PaxDb" id="435590-BVU_0012"/>
<dbReference type="GeneID" id="93448255"/>
<dbReference type="KEGG" id="bvu:BVU_0012"/>
<dbReference type="eggNOG" id="COG0238">
    <property type="taxonomic scope" value="Bacteria"/>
</dbReference>
<dbReference type="HOGENOM" id="CLU_148710_2_0_10"/>
<dbReference type="BioCyc" id="BVUL435590:G1G59-13-MONOMER"/>
<dbReference type="Proteomes" id="UP000002861">
    <property type="component" value="Chromosome"/>
</dbReference>
<dbReference type="GO" id="GO:0022627">
    <property type="term" value="C:cytosolic small ribosomal subunit"/>
    <property type="evidence" value="ECO:0007669"/>
    <property type="project" value="TreeGrafter"/>
</dbReference>
<dbReference type="GO" id="GO:0070181">
    <property type="term" value="F:small ribosomal subunit rRNA binding"/>
    <property type="evidence" value="ECO:0007669"/>
    <property type="project" value="TreeGrafter"/>
</dbReference>
<dbReference type="GO" id="GO:0003735">
    <property type="term" value="F:structural constituent of ribosome"/>
    <property type="evidence" value="ECO:0007669"/>
    <property type="project" value="InterPro"/>
</dbReference>
<dbReference type="GO" id="GO:0006412">
    <property type="term" value="P:translation"/>
    <property type="evidence" value="ECO:0007669"/>
    <property type="project" value="UniProtKB-UniRule"/>
</dbReference>
<dbReference type="FunFam" id="4.10.640.10:FF:000004">
    <property type="entry name" value="30S ribosomal protein S18"/>
    <property type="match status" value="1"/>
</dbReference>
<dbReference type="Gene3D" id="4.10.640.10">
    <property type="entry name" value="Ribosomal protein S18"/>
    <property type="match status" value="1"/>
</dbReference>
<dbReference type="HAMAP" id="MF_00270">
    <property type="entry name" value="Ribosomal_bS18"/>
    <property type="match status" value="1"/>
</dbReference>
<dbReference type="InterPro" id="IPR001648">
    <property type="entry name" value="Ribosomal_bS18"/>
</dbReference>
<dbReference type="InterPro" id="IPR018275">
    <property type="entry name" value="Ribosomal_bS18_CS"/>
</dbReference>
<dbReference type="InterPro" id="IPR036870">
    <property type="entry name" value="Ribosomal_bS18_sf"/>
</dbReference>
<dbReference type="NCBIfam" id="TIGR00165">
    <property type="entry name" value="S18"/>
    <property type="match status" value="1"/>
</dbReference>
<dbReference type="PANTHER" id="PTHR13479">
    <property type="entry name" value="30S RIBOSOMAL PROTEIN S18"/>
    <property type="match status" value="1"/>
</dbReference>
<dbReference type="PANTHER" id="PTHR13479:SF40">
    <property type="entry name" value="SMALL RIBOSOMAL SUBUNIT PROTEIN BS18M"/>
    <property type="match status" value="1"/>
</dbReference>
<dbReference type="Pfam" id="PF01084">
    <property type="entry name" value="Ribosomal_S18"/>
    <property type="match status" value="1"/>
</dbReference>
<dbReference type="PRINTS" id="PR00974">
    <property type="entry name" value="RIBOSOMALS18"/>
</dbReference>
<dbReference type="SUPFAM" id="SSF46911">
    <property type="entry name" value="Ribosomal protein S18"/>
    <property type="match status" value="1"/>
</dbReference>
<dbReference type="PROSITE" id="PS00057">
    <property type="entry name" value="RIBOSOMAL_S18"/>
    <property type="match status" value="1"/>
</dbReference>